<comment type="subunit">
    <text evidence="3">Interacts with SPL.</text>
</comment>
<comment type="interaction">
    <interactant intactId="EBI-15192297">
        <id>Q9LQF0</id>
    </interactant>
    <interactant intactId="EBI-617501">
        <id>Q9LPW7</id>
        <label>AFB3</label>
    </interactant>
    <organismsDiffer>false</organismsDiffer>
    <experiments>3</experiments>
</comment>
<comment type="interaction">
    <interactant intactId="EBI-15192297">
        <id>Q9LQF0</id>
    </interactant>
    <interactant intactId="EBI-2363348">
        <id>Q9FLI3</id>
        <label>AHG1</label>
    </interactant>
    <organismsDiffer>false</organismsDiffer>
    <experiments>3</experiments>
</comment>
<comment type="interaction">
    <interactant intactId="EBI-15192297">
        <id>Q9LQF0</id>
    </interactant>
    <interactant intactId="EBI-1100687">
        <id>Q9ZNV8</id>
        <label>AHP2</label>
    </interactant>
    <organismsDiffer>false</organismsDiffer>
    <experiments>3</experiments>
</comment>
<comment type="interaction">
    <interactant intactId="EBI-15192297">
        <id>Q9LQF0</id>
    </interactant>
    <interactant intactId="EBI-1799262">
        <id>Q94JM3</id>
        <label>ARF2</label>
    </interactant>
    <organismsDiffer>false</organismsDiffer>
    <experiments>3</experiments>
</comment>
<comment type="interaction">
    <interactant intactId="EBI-15192297">
        <id>Q9LQF0</id>
    </interactant>
    <interactant intactId="EBI-1100737">
        <id>Q8L9Y3</id>
        <label>ARR14</label>
    </interactant>
    <organismsDiffer>false</organismsDiffer>
    <experiments>3</experiments>
</comment>
<comment type="interaction">
    <interactant intactId="EBI-15192297">
        <id>Q9LQF0</id>
    </interactant>
    <interactant intactId="EBI-1100950">
        <id>O80366</id>
        <label>ARR9</label>
    </interactant>
    <organismsDiffer>false</organismsDiffer>
    <experiments>3</experiments>
</comment>
<comment type="interaction">
    <interactant intactId="EBI-15192297">
        <id>Q9LQF0</id>
    </interactant>
    <interactant intactId="EBI-15191587">
        <id>F4K1A8</id>
        <label>At5g26749</label>
    </interactant>
    <organismsDiffer>false</organismsDiffer>
    <experiments>3</experiments>
</comment>
<comment type="interaction">
    <interactant intactId="EBI-15192297">
        <id>Q9LQF0</id>
    </interactant>
    <interactant intactId="EBI-4440101">
        <id>Q8GZ13</id>
        <label>BEE1</label>
    </interactant>
    <organismsDiffer>false</organismsDiffer>
    <experiments>3</experiments>
</comment>
<comment type="interaction">
    <interactant intactId="EBI-15192297">
        <id>Q9LQF0</id>
    </interactant>
    <interactant intactId="EBI-4424312">
        <id>Q93VJ4</id>
        <label>BEE2</label>
    </interactant>
    <organismsDiffer>false</organismsDiffer>
    <experiments>5</experiments>
</comment>
<comment type="interaction">
    <interactant intactId="EBI-15192297">
        <id>Q9LQF0</id>
    </interactant>
    <interactant intactId="EBI-4427748">
        <id>Q7XJU2</id>
        <label>BHLH153</label>
    </interactant>
    <organismsDiffer>false</organismsDiffer>
    <experiments>3</experiments>
</comment>
<comment type="interaction">
    <interactant intactId="EBI-15192297">
        <id>Q9LQF0</id>
    </interactant>
    <interactant intactId="EBI-16967606">
        <id>Q9FJ55</id>
        <label>CIPK19</label>
    </interactant>
    <organismsDiffer>false</organismsDiffer>
    <experiments>3</experiments>
</comment>
<comment type="interaction">
    <interactant intactId="EBI-15192297">
        <id>Q9LQF0</id>
    </interactant>
    <interactant intactId="EBI-1748724">
        <id>Q2V452</id>
        <label>CIPK3</label>
    </interactant>
    <organismsDiffer>false</organismsDiffer>
    <experiments>3</experiments>
</comment>
<comment type="interaction">
    <interactant intactId="EBI-15192297">
        <id>Q9LQF0</id>
    </interactant>
    <interactant intactId="EBI-962511">
        <id>A9LNK9</id>
        <label>CPSF30</label>
    </interactant>
    <organismsDiffer>false</organismsDiffer>
    <experiments>3</experiments>
</comment>
<comment type="interaction">
    <interactant intactId="EBI-15192297">
        <id>Q9LQF0</id>
    </interactant>
    <interactant intactId="EBI-401198">
        <id>Q9SKK0</id>
        <label>EBF1</label>
    </interactant>
    <organismsDiffer>false</organismsDiffer>
    <experiments>3</experiments>
</comment>
<comment type="interaction">
    <interactant intactId="EBI-15192297">
        <id>Q9LQF0</id>
    </interactant>
    <interactant intactId="EBI-4446727">
        <id>Q94ID6</id>
        <label>ERF12</label>
    </interactant>
    <organismsDiffer>false</organismsDiffer>
    <experiments>4</experiments>
</comment>
<comment type="interaction">
    <interactant intactId="EBI-15192297">
        <id>Q9LQF0</id>
    </interactant>
    <interactant intactId="EBI-2000137">
        <id>Q9MAI5</id>
        <label>ERF8</label>
    </interactant>
    <organismsDiffer>false</organismsDiffer>
    <experiments>4</experiments>
</comment>
<comment type="interaction">
    <interactant intactId="EBI-15192297">
        <id>Q9LQF0</id>
    </interactant>
    <interactant intactId="EBI-1235922">
        <id>Q8RWQ8</id>
        <label>FBX14</label>
    </interactant>
    <organismsDiffer>false</organismsDiffer>
    <experiments>3</experiments>
</comment>
<comment type="interaction">
    <interactant intactId="EBI-15192297">
        <id>Q9LQF0</id>
    </interactant>
    <interactant intactId="EBI-4426378">
        <id>Q39103</id>
        <label>GA3OX1</label>
    </interactant>
    <organismsDiffer>false</organismsDiffer>
    <experiments>3</experiments>
</comment>
<comment type="interaction">
    <interactant intactId="EBI-15192297">
        <id>Q9LQF0</id>
    </interactant>
    <interactant intactId="EBI-25512974">
        <id>Q9ZT84</id>
        <label>GA3OX2</label>
    </interactant>
    <organismsDiffer>false</organismsDiffer>
    <experiments>3</experiments>
</comment>
<comment type="interaction">
    <interactant intactId="EBI-15192297">
        <id>Q9LQF0</id>
    </interactant>
    <interactant intactId="EBI-4457746">
        <id>Q9LV52</id>
        <label>HSFC1</label>
    </interactant>
    <organismsDiffer>false</organismsDiffer>
    <experiments>3</experiments>
</comment>
<comment type="interaction">
    <interactant intactId="EBI-15192297">
        <id>Q9LQF0</id>
    </interactant>
    <interactant intactId="EBI-604555">
        <id>Q84JU4</id>
        <label>IBR5</label>
    </interactant>
    <organismsDiffer>false</organismsDiffer>
    <experiments>3</experiments>
</comment>
<comment type="interaction">
    <interactant intactId="EBI-15192297">
        <id>Q9LQF0</id>
    </interactant>
    <interactant intactId="EBI-530486">
        <id>P46639</id>
        <label>KNAT1</label>
    </interactant>
    <organismsDiffer>false</organismsDiffer>
    <experiments>3</experiments>
</comment>
<comment type="interaction">
    <interactant intactId="EBI-15192297">
        <id>Q9LQF0</id>
    </interactant>
    <interactant intactId="EBI-1153908">
        <id>P48000</id>
        <label>KNAT3</label>
    </interactant>
    <organismsDiffer>false</organismsDiffer>
    <experiments>3</experiments>
</comment>
<comment type="interaction">
    <interactant intactId="EBI-15192297">
        <id>Q9LQF0</id>
    </interactant>
    <interactant intactId="EBI-994350">
        <id>Q9S7U9</id>
        <label>MKK2</label>
    </interactant>
    <organismsDiffer>false</organismsDiffer>
    <experiments>3</experiments>
</comment>
<comment type="interaction">
    <interactant intactId="EBI-15192297">
        <id>Q9LQF0</id>
    </interactant>
    <interactant intactId="EBI-2128593">
        <id>Q9LPQ3</id>
        <label>MKK7</label>
    </interactant>
    <organismsDiffer>false</organismsDiffer>
    <experiments>3</experiments>
</comment>
<comment type="interaction">
    <interactant intactId="EBI-15192297">
        <id>Q9LQF0</id>
    </interactant>
    <interactant intactId="EBI-25512915">
        <id>Q8GYH7</id>
        <label>MMS21</label>
    </interactant>
    <organismsDiffer>false</organismsDiffer>
    <experiments>3</experiments>
</comment>
<comment type="interaction">
    <interactant intactId="EBI-15192297">
        <id>Q9LQF0</id>
    </interactant>
    <interactant intactId="EBI-1238932">
        <id>Q39021</id>
        <label>MPK1</label>
    </interactant>
    <organismsDiffer>false</organismsDiffer>
    <experiments>3</experiments>
</comment>
<comment type="interaction">
    <interactant intactId="EBI-15192297">
        <id>Q9LQF0</id>
    </interactant>
    <interactant intactId="EBI-25512843">
        <id>Q9LUC3</id>
        <label>MPK19</label>
    </interactant>
    <organismsDiffer>false</organismsDiffer>
    <experiments>3</experiments>
</comment>
<comment type="interaction">
    <interactant intactId="EBI-15192297">
        <id>Q9LQF0</id>
    </interactant>
    <interactant intactId="EBI-2358896">
        <id>Q9SJG9</id>
        <label>MPK20</label>
    </interactant>
    <organismsDiffer>false</organismsDiffer>
    <experiments>3</experiments>
</comment>
<comment type="interaction">
    <interactant intactId="EBI-15192297">
        <id>Q9LQF0</id>
    </interactant>
    <interactant intactId="EBI-349526">
        <id>Q39023</id>
        <label>MPK3</label>
    </interactant>
    <organismsDiffer>false</organismsDiffer>
    <experiments>3</experiments>
</comment>
<comment type="interaction">
    <interactant intactId="EBI-15192297">
        <id>Q9LQF0</id>
    </interactant>
    <interactant intactId="EBI-25511270">
        <id>Q9FX36</id>
        <label>MYB54</label>
    </interactant>
    <organismsDiffer>false</organismsDiffer>
    <experiments>3</experiments>
</comment>
<comment type="interaction">
    <interactant intactId="EBI-15192297">
        <id>Q9LQF0</id>
    </interactant>
    <interactant intactId="EBI-2466050">
        <id>Q8L4B2</id>
        <label>NFYC9</label>
    </interactant>
    <organismsDiffer>false</organismsDiffer>
    <experiments>4</experiments>
</comment>
<comment type="interaction">
    <interactant intactId="EBI-15192297">
        <id>Q9LQF0</id>
    </interactant>
    <interactant intactId="EBI-15193025">
        <id>Q9LXU1</id>
        <label>NOT9B</label>
    </interactant>
    <organismsDiffer>false</organismsDiffer>
    <experiments>3</experiments>
</comment>
<comment type="interaction">
    <interactant intactId="EBI-15192297">
        <id>Q9LQF0</id>
    </interactant>
    <interactant intactId="EBI-25512733">
        <id>Q9M9T4</id>
        <label>PKS2</label>
    </interactant>
    <organismsDiffer>false</organismsDiffer>
    <experiments>3</experiments>
</comment>
<comment type="interaction">
    <interactant intactId="EBI-15192297">
        <id>Q9LQF0</id>
    </interactant>
    <interactant intactId="EBI-25512318">
        <id>O23078</id>
        <label>PLDBETA2</label>
    </interactant>
    <organismsDiffer>false</organismsDiffer>
    <experiments>3</experiments>
</comment>
<comment type="interaction">
    <interactant intactId="EBI-15192297">
        <id>Q9LQF0</id>
    </interactant>
    <interactant intactId="EBI-16967096">
        <id>Q8H133</id>
        <label>PLP8</label>
    </interactant>
    <organismsDiffer>false</organismsDiffer>
    <experiments>3</experiments>
</comment>
<comment type="interaction">
    <interactant intactId="EBI-15192297">
        <id>Q9LQF0</id>
    </interactant>
    <interactant intactId="EBI-2363181">
        <id>Q9FLB1</id>
        <label>PYL5</label>
    </interactant>
    <organismsDiffer>false</organismsDiffer>
    <experiments>3</experiments>
</comment>
<comment type="interaction">
    <interactant intactId="EBI-15192297">
        <id>Q9LQF0</id>
    </interactant>
    <interactant intactId="EBI-4470690">
        <id>Q93ZX1</id>
        <label>RFC4</label>
    </interactant>
    <organismsDiffer>false</organismsDiffer>
    <experiments>3</experiments>
</comment>
<comment type="interaction">
    <interactant intactId="EBI-15192297">
        <id>Q9LQF0</id>
    </interactant>
    <interactant intactId="EBI-594133">
        <id>Q9SGW3</id>
        <label>RPN12A</label>
    </interactant>
    <organismsDiffer>false</organismsDiffer>
    <experiments>3</experiments>
</comment>
<comment type="interaction">
    <interactant intactId="EBI-15192297">
        <id>Q9LQF0</id>
    </interactant>
    <interactant intactId="EBI-15395779">
        <id>Q8H125</id>
        <label>SCL5</label>
    </interactant>
    <organismsDiffer>false</organismsDiffer>
    <experiments>3</experiments>
</comment>
<comment type="interaction">
    <interactant intactId="EBI-15192297">
        <id>Q9LQF0</id>
    </interactant>
    <interactant intactId="EBI-4426966">
        <id>Q9M8Y0</id>
        <label>SEC</label>
    </interactant>
    <organismsDiffer>false</organismsDiffer>
    <experiments>3</experiments>
</comment>
<comment type="interaction">
    <interactant intactId="EBI-15192297">
        <id>Q9LQF0</id>
    </interactant>
    <interactant intactId="EBI-4436014">
        <id>Q6PV67</id>
        <label>SNZ</label>
    </interactant>
    <organismsDiffer>false</organismsDiffer>
    <experiments>3</experiments>
</comment>
<comment type="interaction">
    <interactant intactId="EBI-15192297">
        <id>Q9LQF0</id>
    </interactant>
    <interactant intactId="EBI-1536703">
        <id>Q9FUA4</id>
        <label>SPT</label>
    </interactant>
    <organismsDiffer>false</organismsDiffer>
    <experiments>3</experiments>
</comment>
<comment type="interaction">
    <interactant intactId="EBI-15192297">
        <id>Q9LQF0</id>
    </interactant>
    <interactant intactId="EBI-25512645">
        <id>Q9FLP5</id>
        <label>SUMO3</label>
    </interactant>
    <organismsDiffer>false</organismsDiffer>
    <experiments>3</experiments>
</comment>
<comment type="interaction">
    <interactant intactId="EBI-15192297">
        <id>Q9LQF0</id>
    </interactant>
    <interactant intactId="EBI-15192297">
        <id>Q9LQF0</id>
        <label>TCP23</label>
    </interactant>
    <organismsDiffer>false</organismsDiffer>
    <experiments>3</experiments>
</comment>
<comment type="interaction">
    <interactant intactId="EBI-15192297">
        <id>Q9LQF0</id>
    </interactant>
    <interactant intactId="EBI-15192677">
        <id>Q9FMX2</id>
        <label>TCP7</label>
    </interactant>
    <organismsDiffer>false</organismsDiffer>
    <experiments>3</experiments>
</comment>
<comment type="interaction">
    <interactant intactId="EBI-15192297">
        <id>Q9LQF0</id>
    </interactant>
    <interactant intactId="EBI-3134124">
        <id>Q9C518</id>
        <label>TCP8</label>
    </interactant>
    <organismsDiffer>false</organismsDiffer>
    <experiments>3</experiments>
</comment>
<comment type="interaction">
    <interactant intactId="EBI-15192297">
        <id>Q9LQF0</id>
    </interactant>
    <interactant intactId="EBI-15199673">
        <id>Q7XA73</id>
        <label>TIFY4A</label>
    </interactant>
    <organismsDiffer>false</organismsDiffer>
    <experiments>3</experiments>
</comment>
<comment type="interaction">
    <interactant intactId="EBI-15192297">
        <id>Q9LQF0</id>
    </interactant>
    <interactant intactId="EBI-307183">
        <id>Q570C0</id>
        <label>TIR1</label>
    </interactant>
    <organismsDiffer>false</organismsDiffer>
    <experiments>3</experiments>
</comment>
<comment type="interaction">
    <interactant intactId="EBI-15192297">
        <id>Q9LQF0</id>
    </interactant>
    <interactant intactId="EBI-1239118">
        <id>O04336</id>
        <label>WRKY21</label>
    </interactant>
    <organismsDiffer>false</organismsDiffer>
    <experiments>3</experiments>
</comment>
<comment type="interaction">
    <interactant intactId="EBI-15192297">
        <id>Q9LQF0</id>
    </interactant>
    <interactant intactId="EBI-15202502">
        <id>Q8H0Y8</id>
        <label>WRKY41</label>
    </interactant>
    <organismsDiffer>false</organismsDiffer>
    <experiments>3</experiments>
</comment>
<comment type="interaction">
    <interactant intactId="EBI-15192297">
        <id>Q9LQF0</id>
    </interactant>
    <interactant intactId="EBI-1235953">
        <id>Q8GY11</id>
        <label>WRKY43</label>
    </interactant>
    <organismsDiffer>false</organismsDiffer>
    <experiments>3</experiments>
</comment>
<comment type="interaction">
    <interactant intactId="EBI-15192297">
        <id>Q9LQF0</id>
    </interactant>
    <interactant intactId="EBI-15195723">
        <id>Q9S763</id>
        <label>WRKY45</label>
    </interactant>
    <organismsDiffer>false</organismsDiffer>
    <experiments>6</experiments>
</comment>
<comment type="interaction">
    <interactant intactId="EBI-15192297">
        <id>Q9LQF0</id>
    </interactant>
    <interactant intactId="EBI-15196471">
        <id>Q9FHR7</id>
        <label>WRKY49</label>
    </interactant>
    <organismsDiffer>false</organismsDiffer>
    <experiments>3</experiments>
</comment>
<comment type="interaction">
    <interactant intactId="EBI-15192297">
        <id>Q9LQF0</id>
    </interactant>
    <interactant intactId="EBI-4427645">
        <id>Q9FYA2</id>
        <label>WRKY75</label>
    </interactant>
    <organismsDiffer>false</organismsDiffer>
    <experiments>3</experiments>
</comment>
<comment type="interaction">
    <interactant intactId="EBI-15192297">
        <id>Q9LQF0</id>
    </interactant>
    <interactant intactId="EBI-2119269">
        <id>Q9SB92</id>
        <label>WUS</label>
    </interactant>
    <organismsDiffer>false</organismsDiffer>
    <experiments>3</experiments>
</comment>
<comment type="subcellular location">
    <subcellularLocation>
        <location evidence="4">Nucleus</location>
    </subcellularLocation>
</comment>
<evidence type="ECO:0000255" key="1">
    <source>
        <dbReference type="PROSITE-ProRule" id="PRU00701"/>
    </source>
</evidence>
<evidence type="ECO:0000256" key="2">
    <source>
        <dbReference type="SAM" id="MobiDB-lite"/>
    </source>
</evidence>
<evidence type="ECO:0000269" key="3">
    <source>
    </source>
</evidence>
<evidence type="ECO:0000305" key="4"/>
<feature type="chain" id="PRO_0000330797" description="Transcription factor TCP23">
    <location>
        <begin position="1"/>
        <end position="341"/>
    </location>
</feature>
<feature type="domain" description="TCP" evidence="1">
    <location>
        <begin position="55"/>
        <end position="109"/>
    </location>
</feature>
<feature type="region of interest" description="Disordered" evidence="2">
    <location>
        <begin position="1"/>
        <end position="59"/>
    </location>
</feature>
<feature type="region of interest" description="Disordered" evidence="2">
    <location>
        <begin position="183"/>
        <end position="218"/>
    </location>
</feature>
<feature type="region of interest" description="Disordered" evidence="2">
    <location>
        <begin position="313"/>
        <end position="341"/>
    </location>
</feature>
<feature type="compositionally biased region" description="Low complexity" evidence="2">
    <location>
        <begin position="1"/>
        <end position="12"/>
    </location>
</feature>
<feature type="compositionally biased region" description="Low complexity" evidence="2">
    <location>
        <begin position="33"/>
        <end position="49"/>
    </location>
</feature>
<feature type="compositionally biased region" description="Basic residues" evidence="2">
    <location>
        <begin position="50"/>
        <end position="59"/>
    </location>
</feature>
<feature type="compositionally biased region" description="Polar residues" evidence="2">
    <location>
        <begin position="332"/>
        <end position="341"/>
    </location>
</feature>
<organism>
    <name type="scientific">Arabidopsis thaliana</name>
    <name type="common">Mouse-ear cress</name>
    <dbReference type="NCBI Taxonomy" id="3702"/>
    <lineage>
        <taxon>Eukaryota</taxon>
        <taxon>Viridiplantae</taxon>
        <taxon>Streptophyta</taxon>
        <taxon>Embryophyta</taxon>
        <taxon>Tracheophyta</taxon>
        <taxon>Spermatophyta</taxon>
        <taxon>Magnoliopsida</taxon>
        <taxon>eudicotyledons</taxon>
        <taxon>Gunneridae</taxon>
        <taxon>Pentapetalae</taxon>
        <taxon>rosids</taxon>
        <taxon>malvids</taxon>
        <taxon>Brassicales</taxon>
        <taxon>Brassicaceae</taxon>
        <taxon>Camelineae</taxon>
        <taxon>Arabidopsis</taxon>
    </lineage>
</organism>
<keyword id="KW-0238">DNA-binding</keyword>
<keyword id="KW-0539">Nucleus</keyword>
<keyword id="KW-1185">Reference proteome</keyword>
<keyword id="KW-0804">Transcription</keyword>
<keyword id="KW-0805">Transcription regulation</keyword>
<dbReference type="EMBL" id="AC007887">
    <property type="protein sequence ID" value="AAF79358.1"/>
    <property type="molecule type" value="Genomic_DNA"/>
</dbReference>
<dbReference type="EMBL" id="CP002684">
    <property type="protein sequence ID" value="AEE31811.1"/>
    <property type="molecule type" value="Genomic_DNA"/>
</dbReference>
<dbReference type="EMBL" id="AY056429">
    <property type="protein sequence ID" value="AAL08285.1"/>
    <property type="molecule type" value="mRNA"/>
</dbReference>
<dbReference type="EMBL" id="AY081714">
    <property type="protein sequence ID" value="AAL87367.1"/>
    <property type="molecule type" value="mRNA"/>
</dbReference>
<dbReference type="PIR" id="H86476">
    <property type="entry name" value="H86476"/>
</dbReference>
<dbReference type="RefSeq" id="NP_174789.1">
    <property type="nucleotide sequence ID" value="NM_103253.2"/>
</dbReference>
<dbReference type="SMR" id="Q9LQF0"/>
<dbReference type="BioGRID" id="25684">
    <property type="interactions" value="152"/>
</dbReference>
<dbReference type="FunCoup" id="Q9LQF0">
    <property type="interactions" value="2"/>
</dbReference>
<dbReference type="IntAct" id="Q9LQF0">
    <property type="interactions" value="150"/>
</dbReference>
<dbReference type="STRING" id="3702.Q9LQF0"/>
<dbReference type="GlyGen" id="Q9LQF0">
    <property type="glycosylation" value="1 site"/>
</dbReference>
<dbReference type="iPTMnet" id="Q9LQF0"/>
<dbReference type="PaxDb" id="3702-AT1G35560.1"/>
<dbReference type="ProteomicsDB" id="234203"/>
<dbReference type="EnsemblPlants" id="AT1G35560.1">
    <property type="protein sequence ID" value="AT1G35560.1"/>
    <property type="gene ID" value="AT1G35560"/>
</dbReference>
<dbReference type="GeneID" id="840452"/>
<dbReference type="Gramene" id="AT1G35560.1">
    <property type="protein sequence ID" value="AT1G35560.1"/>
    <property type="gene ID" value="AT1G35560"/>
</dbReference>
<dbReference type="KEGG" id="ath:AT1G35560"/>
<dbReference type="Araport" id="AT1G35560"/>
<dbReference type="TAIR" id="AT1G35560">
    <property type="gene designation" value="TCP23"/>
</dbReference>
<dbReference type="eggNOG" id="ENOG502QUI5">
    <property type="taxonomic scope" value="Eukaryota"/>
</dbReference>
<dbReference type="HOGENOM" id="CLU_025170_2_1_1"/>
<dbReference type="InParanoid" id="Q9LQF0"/>
<dbReference type="OMA" id="TRELQHK"/>
<dbReference type="PhylomeDB" id="Q9LQF0"/>
<dbReference type="PRO" id="PR:Q9LQF0"/>
<dbReference type="Proteomes" id="UP000006548">
    <property type="component" value="Chromosome 1"/>
</dbReference>
<dbReference type="ExpressionAtlas" id="Q9LQF0">
    <property type="expression patterns" value="baseline and differential"/>
</dbReference>
<dbReference type="GO" id="GO:0005634">
    <property type="term" value="C:nucleus"/>
    <property type="evidence" value="ECO:0000314"/>
    <property type="project" value="TAIR"/>
</dbReference>
<dbReference type="GO" id="GO:0003700">
    <property type="term" value="F:DNA-binding transcription factor activity"/>
    <property type="evidence" value="ECO:0000250"/>
    <property type="project" value="TAIR"/>
</dbReference>
<dbReference type="GO" id="GO:0042802">
    <property type="term" value="F:identical protein binding"/>
    <property type="evidence" value="ECO:0000353"/>
    <property type="project" value="IntAct"/>
</dbReference>
<dbReference type="GO" id="GO:0000976">
    <property type="term" value="F:transcription cis-regulatory region binding"/>
    <property type="evidence" value="ECO:0000353"/>
    <property type="project" value="TAIR"/>
</dbReference>
<dbReference type="GO" id="GO:0006355">
    <property type="term" value="P:regulation of DNA-templated transcription"/>
    <property type="evidence" value="ECO:0000304"/>
    <property type="project" value="TAIR"/>
</dbReference>
<dbReference type="GO" id="GO:0048510">
    <property type="term" value="P:regulation of timing of transition from vegetative to reproductive phase"/>
    <property type="evidence" value="ECO:0000315"/>
    <property type="project" value="TAIR"/>
</dbReference>
<dbReference type="InterPro" id="IPR017887">
    <property type="entry name" value="TF_TCP_subgr"/>
</dbReference>
<dbReference type="InterPro" id="IPR005333">
    <property type="entry name" value="Transcription_factor_TCP"/>
</dbReference>
<dbReference type="PANTHER" id="PTHR31072:SF108">
    <property type="entry name" value="TRANSCRIPTION FACTOR TCP22-RELATED"/>
    <property type="match status" value="1"/>
</dbReference>
<dbReference type="PANTHER" id="PTHR31072">
    <property type="entry name" value="TRANSCRIPTION FACTOR TCP4-RELATED"/>
    <property type="match status" value="1"/>
</dbReference>
<dbReference type="Pfam" id="PF03634">
    <property type="entry name" value="TCP"/>
    <property type="match status" value="1"/>
</dbReference>
<dbReference type="PROSITE" id="PS51369">
    <property type="entry name" value="TCP"/>
    <property type="match status" value="1"/>
</dbReference>
<proteinExistence type="evidence at protein level"/>
<sequence>MESHNNNQSNNNTTGSAHLVPSMGPISGSVSLTTTAPNSTTTTVTAAKTPAKRPSKDRHIKVDGRGRRIRMPAICAARVFQLTRELQHKSDGETIEWLLQQAEPAIIAATGTGTIPANISTLNISLRSSGSTLSAPLSKSFHMGRAAQNAAVFGFQQQLYHPHHITTDSSSSSLPKTFREEDLFKDPNFLDQEPGSRSPKPGSEAPDQDPGSTRSRTQNMIPPMWALAPTPASTNGGSAFWMLPVGGGGGPANVQDPSQHMWAFNPGHYPGRIGSVQLGSMLVGGQQLGLGVAENNNLGLFSGGGGDGGRVGLGMSLEQKPQHQVSDHATRDQNPTIDGSP</sequence>
<name>TCP23_ARATH</name>
<accession>Q9LQF0</accession>
<protein>
    <recommendedName>
        <fullName>Transcription factor TCP23</fullName>
    </recommendedName>
</protein>
<reference key="1">
    <citation type="journal article" date="2000" name="Nature">
        <title>Sequence and analysis of chromosome 1 of the plant Arabidopsis thaliana.</title>
        <authorList>
            <person name="Theologis A."/>
            <person name="Ecker J.R."/>
            <person name="Palm C.J."/>
            <person name="Federspiel N.A."/>
            <person name="Kaul S."/>
            <person name="White O."/>
            <person name="Alonso J."/>
            <person name="Altafi H."/>
            <person name="Araujo R."/>
            <person name="Bowman C.L."/>
            <person name="Brooks S.Y."/>
            <person name="Buehler E."/>
            <person name="Chan A."/>
            <person name="Chao Q."/>
            <person name="Chen H."/>
            <person name="Cheuk R.F."/>
            <person name="Chin C.W."/>
            <person name="Chung M.K."/>
            <person name="Conn L."/>
            <person name="Conway A.B."/>
            <person name="Conway A.R."/>
            <person name="Creasy T.H."/>
            <person name="Dewar K."/>
            <person name="Dunn P."/>
            <person name="Etgu P."/>
            <person name="Feldblyum T.V."/>
            <person name="Feng J.-D."/>
            <person name="Fong B."/>
            <person name="Fujii C.Y."/>
            <person name="Gill J.E."/>
            <person name="Goldsmith A.D."/>
            <person name="Haas B."/>
            <person name="Hansen N.F."/>
            <person name="Hughes B."/>
            <person name="Huizar L."/>
            <person name="Hunter J.L."/>
            <person name="Jenkins J."/>
            <person name="Johnson-Hopson C."/>
            <person name="Khan S."/>
            <person name="Khaykin E."/>
            <person name="Kim C.J."/>
            <person name="Koo H.L."/>
            <person name="Kremenetskaia I."/>
            <person name="Kurtz D.B."/>
            <person name="Kwan A."/>
            <person name="Lam B."/>
            <person name="Langin-Hooper S."/>
            <person name="Lee A."/>
            <person name="Lee J.M."/>
            <person name="Lenz C.A."/>
            <person name="Li J.H."/>
            <person name="Li Y.-P."/>
            <person name="Lin X."/>
            <person name="Liu S.X."/>
            <person name="Liu Z.A."/>
            <person name="Luros J.S."/>
            <person name="Maiti R."/>
            <person name="Marziali A."/>
            <person name="Militscher J."/>
            <person name="Miranda M."/>
            <person name="Nguyen M."/>
            <person name="Nierman W.C."/>
            <person name="Osborne B.I."/>
            <person name="Pai G."/>
            <person name="Peterson J."/>
            <person name="Pham P.K."/>
            <person name="Rizzo M."/>
            <person name="Rooney T."/>
            <person name="Rowley D."/>
            <person name="Sakano H."/>
            <person name="Salzberg S.L."/>
            <person name="Schwartz J.R."/>
            <person name="Shinn P."/>
            <person name="Southwick A.M."/>
            <person name="Sun H."/>
            <person name="Tallon L.J."/>
            <person name="Tambunga G."/>
            <person name="Toriumi M.J."/>
            <person name="Town C.D."/>
            <person name="Utterback T."/>
            <person name="Van Aken S."/>
            <person name="Vaysberg M."/>
            <person name="Vysotskaia V.S."/>
            <person name="Walker M."/>
            <person name="Wu D."/>
            <person name="Yu G."/>
            <person name="Fraser C.M."/>
            <person name="Venter J.C."/>
            <person name="Davis R.W."/>
        </authorList>
    </citation>
    <scope>NUCLEOTIDE SEQUENCE [LARGE SCALE GENOMIC DNA]</scope>
    <source>
        <strain>cv. Columbia</strain>
    </source>
</reference>
<reference key="2">
    <citation type="journal article" date="2017" name="Plant J.">
        <title>Araport11: a complete reannotation of the Arabidopsis thaliana reference genome.</title>
        <authorList>
            <person name="Cheng C.Y."/>
            <person name="Krishnakumar V."/>
            <person name="Chan A.P."/>
            <person name="Thibaud-Nissen F."/>
            <person name="Schobel S."/>
            <person name="Town C.D."/>
        </authorList>
    </citation>
    <scope>GENOME REANNOTATION</scope>
    <source>
        <strain>cv. Columbia</strain>
    </source>
</reference>
<reference key="3">
    <citation type="journal article" date="2003" name="Science">
        <title>Empirical analysis of transcriptional activity in the Arabidopsis genome.</title>
        <authorList>
            <person name="Yamada K."/>
            <person name="Lim J."/>
            <person name="Dale J.M."/>
            <person name="Chen H."/>
            <person name="Shinn P."/>
            <person name="Palm C.J."/>
            <person name="Southwick A.M."/>
            <person name="Wu H.C."/>
            <person name="Kim C.J."/>
            <person name="Nguyen M."/>
            <person name="Pham P.K."/>
            <person name="Cheuk R.F."/>
            <person name="Karlin-Newmann G."/>
            <person name="Liu S.X."/>
            <person name="Lam B."/>
            <person name="Sakano H."/>
            <person name="Wu T."/>
            <person name="Yu G."/>
            <person name="Miranda M."/>
            <person name="Quach H.L."/>
            <person name="Tripp M."/>
            <person name="Chang C.H."/>
            <person name="Lee J.M."/>
            <person name="Toriumi M.J."/>
            <person name="Chan M.M."/>
            <person name="Tang C.C."/>
            <person name="Onodera C.S."/>
            <person name="Deng J.M."/>
            <person name="Akiyama K."/>
            <person name="Ansari Y."/>
            <person name="Arakawa T."/>
            <person name="Banh J."/>
            <person name="Banno F."/>
            <person name="Bowser L."/>
            <person name="Brooks S.Y."/>
            <person name="Carninci P."/>
            <person name="Chao Q."/>
            <person name="Choy N."/>
            <person name="Enju A."/>
            <person name="Goldsmith A.D."/>
            <person name="Gurjal M."/>
            <person name="Hansen N.F."/>
            <person name="Hayashizaki Y."/>
            <person name="Johnson-Hopson C."/>
            <person name="Hsuan V.W."/>
            <person name="Iida K."/>
            <person name="Karnes M."/>
            <person name="Khan S."/>
            <person name="Koesema E."/>
            <person name="Ishida J."/>
            <person name="Jiang P.X."/>
            <person name="Jones T."/>
            <person name="Kawai J."/>
            <person name="Kamiya A."/>
            <person name="Meyers C."/>
            <person name="Nakajima M."/>
            <person name="Narusaka M."/>
            <person name="Seki M."/>
            <person name="Sakurai T."/>
            <person name="Satou M."/>
            <person name="Tamse R."/>
            <person name="Vaysberg M."/>
            <person name="Wallender E.K."/>
            <person name="Wong C."/>
            <person name="Yamamura Y."/>
            <person name="Yuan S."/>
            <person name="Shinozaki K."/>
            <person name="Davis R.W."/>
            <person name="Theologis A."/>
            <person name="Ecker J.R."/>
        </authorList>
    </citation>
    <scope>NUCLEOTIDE SEQUENCE [LARGE SCALE MRNA]</scope>
    <source>
        <strain>cv. Columbia</strain>
    </source>
</reference>
<reference key="4">
    <citation type="journal article" date="2007" name="Plant Cell">
        <title>Arabidopsis BRANCHED1 acts as an integrator of branching signals within axillary buds.</title>
        <authorList>
            <person name="Aguilar-Martinez J.A."/>
            <person name="Poza-Carrion C."/>
            <person name="Cubas P."/>
        </authorList>
    </citation>
    <scope>GENE FAMILY</scope>
    <scope>NOMENCLATURE</scope>
</reference>
<reference key="5">
    <citation type="journal article" date="2009" name="Plant Physiol.">
        <title>Large-scale Arabidopsis phosphoproteome profiling reveals novel chloroplast kinase substrates and phosphorylation networks.</title>
        <authorList>
            <person name="Reiland S."/>
            <person name="Messerli G."/>
            <person name="Baerenfaller K."/>
            <person name="Gerrits B."/>
            <person name="Endler A."/>
            <person name="Grossmann J."/>
            <person name="Gruissem W."/>
            <person name="Baginsky S."/>
        </authorList>
    </citation>
    <scope>IDENTIFICATION BY MASS SPECTROMETRY [LARGE SCALE ANALYSIS]</scope>
</reference>
<reference key="6">
    <citation type="journal article" date="2014" name="J. Genet. Genomics">
        <title>SPOROCYTELESS is a novel embryophyte-specific transcription repressor that interacts with TPL and TCP proteins in Arabidopsis.</title>
        <authorList>
            <person name="Chen G.H."/>
            <person name="Sun J.Y."/>
            <person name="Liu M."/>
            <person name="Liu J."/>
            <person name="Yang W.C."/>
        </authorList>
    </citation>
    <scope>INTERACTION WITH SPL</scope>
</reference>
<gene>
    <name type="primary">TCP23</name>
    <name type="ordered locus">At1g35560</name>
    <name type="ORF">F15O4.35</name>
</gene>